<name>POLG_GSMV</name>
<dbReference type="PIR" id="PQ0292">
    <property type="entry name" value="PQ0292"/>
</dbReference>
<dbReference type="SMR" id="P31998"/>
<dbReference type="GO" id="GO:0019028">
    <property type="term" value="C:viral capsid"/>
    <property type="evidence" value="ECO:0007669"/>
    <property type="project" value="UniProtKB-KW"/>
</dbReference>
<dbReference type="InterPro" id="IPR001592">
    <property type="entry name" value="Poty_coat"/>
</dbReference>
<dbReference type="Pfam" id="PF00767">
    <property type="entry name" value="Poty_coat"/>
    <property type="match status" value="1"/>
</dbReference>
<accession>P31998</accession>
<organism>
    <name type="scientific">Gloriosa stripe mosaic virus</name>
    <name type="common">GSMV</name>
    <dbReference type="NCBI Taxonomy" id="12201"/>
    <lineage>
        <taxon>Viruses</taxon>
        <taxon>Riboviria</taxon>
        <taxon>Orthornavirae</taxon>
        <taxon>Pisuviricota</taxon>
        <taxon>Stelpaviricetes</taxon>
        <taxon>Patatavirales</taxon>
        <taxon>Potyviridae</taxon>
        <taxon>Potyvirus</taxon>
        <taxon>Potyvirus gloriosae</taxon>
    </lineage>
</organism>
<proteinExistence type="inferred from homology"/>
<keyword id="KW-0167">Capsid protein</keyword>
<keyword id="KW-0946">Virion</keyword>
<comment type="function">
    <molecule>Capsid protein</molecule>
    <text evidence="2">Involved in aphid transmission, cell-to-cell and systemis movement, encapsidation of the viral RNA and in the regulation of viral RNA amplification.</text>
</comment>
<comment type="subcellular location">
    <molecule>Capsid protein</molecule>
    <subcellularLocation>
        <location evidence="3">Virion</location>
    </subcellularLocation>
</comment>
<comment type="PTM">
    <text evidence="1">Genome polyprotein of potyviruses undergoes post-translational proteolytic processing by the main proteinase NIa-pro resulting in the production of at least ten individual proteins. The P1 proteinase and the HC-pro cleave only their respective C-termini autocatalytically. 6K1 is essential for proper proteolytic separation of P3 from CI (By similarity).</text>
</comment>
<comment type="similarity">
    <text evidence="3">Belongs to the potyviridae genome polyprotein family.</text>
</comment>
<reference key="1">
    <citation type="journal article" date="1991" name="J. Gen. Virol.">
        <title>Identification of potyviruses using the polymerase chain reaction with degenerate primers.</title>
        <authorList>
            <person name="Langeveld S.A."/>
            <person name="Dore J.M."/>
            <person name="Memelink J."/>
            <person name="Derks A.F.L.M."/>
            <person name="van der Vlugt C.I.M."/>
            <person name="Asjes C.J."/>
            <person name="Bol J.F."/>
        </authorList>
    </citation>
    <scope>NUCLEOTIDE SEQUENCE</scope>
</reference>
<reference key="2">
    <citation type="journal article" date="2001" name="Virus Res.">
        <title>Potyvirus proteins: a wealth of functions.</title>
        <authorList>
            <person name="Urcuqui-Inchima S."/>
            <person name="Haenni A.L."/>
            <person name="Bernardi F."/>
        </authorList>
    </citation>
    <scope>REVIEW</scope>
</reference>
<sequence length="90" mass="10786">TSPNINGFWVMLENDEQIEFPIKPLIDHARPTFRQIMSRFSDLAEAYIEKRNFERAYMPRYGLQRNLTDMSLRRYAFDFYEMTSKAPARA</sequence>
<organismHost>
    <name type="scientific">Arachis hypogaea</name>
    <name type="common">Peanut</name>
    <dbReference type="NCBI Taxonomy" id="3818"/>
</organismHost>
<organismHost>
    <name type="scientific">Canna</name>
    <dbReference type="NCBI Taxonomy" id="4627"/>
</organismHost>
<organismHost>
    <name type="scientific">Crotalaria</name>
    <dbReference type="NCBI Taxonomy" id="3828"/>
</organismHost>
<organismHost>
    <name type="scientific">Eustoma</name>
    <dbReference type="NCBI Taxonomy" id="52517"/>
</organismHost>
<organismHost>
    <name type="scientific">Freesia</name>
    <dbReference type="NCBI Taxonomy" id="58987"/>
</organismHost>
<organismHost>
    <name type="scientific">Gladiolus</name>
    <dbReference type="NCBI Taxonomy" id="49747"/>
</organismHost>
<organismHost>
    <name type="scientific">Glycine max</name>
    <name type="common">Soybean</name>
    <name type="synonym">Glycine hispida</name>
    <dbReference type="NCBI Taxonomy" id="3847"/>
</organismHost>
<organismHost>
    <name type="scientific">Lupinus luteus</name>
    <name type="common">European yellow lupine</name>
    <dbReference type="NCBI Taxonomy" id="3873"/>
</organismHost>
<organismHost>
    <name type="scientific">Medicago sativa</name>
    <name type="common">Alfalfa</name>
    <dbReference type="NCBI Taxonomy" id="3879"/>
</organismHost>
<organismHost>
    <name type="scientific">Papaver somniferum</name>
    <name type="common">Opium poppy</name>
    <dbReference type="NCBI Taxonomy" id="3469"/>
</organismHost>
<organismHost>
    <name type="scientific">Phaseolus vulgaris</name>
    <name type="common">Kidney bean</name>
    <name type="synonym">French bean</name>
    <dbReference type="NCBI Taxonomy" id="3885"/>
</organismHost>
<organismHost>
    <name type="scientific">Pisum sativum</name>
    <name type="common">Garden pea</name>
    <name type="synonym">Lathyrus oleraceus</name>
    <dbReference type="NCBI Taxonomy" id="3888"/>
</organismHost>
<organismHost>
    <name type="scientific">Robinia pseudoacacia</name>
    <name type="common">Black locust</name>
    <dbReference type="NCBI Taxonomy" id="35938"/>
</organismHost>
<organismHost>
    <name type="scientific">Trifolium hybridum</name>
    <name type="common">Alsike clover</name>
    <dbReference type="NCBI Taxonomy" id="74517"/>
</organismHost>
<organismHost>
    <name type="scientific">Trifolium incarnatum</name>
    <name type="common">Crimson clover</name>
    <dbReference type="NCBI Taxonomy" id="60916"/>
</organismHost>
<organismHost>
    <name type="scientific">Trifolium pratense</name>
    <name type="common">Red clover</name>
    <dbReference type="NCBI Taxonomy" id="57577"/>
</organismHost>
<organismHost>
    <name type="scientific">Trifolium repens</name>
    <name type="common">Creeping white clover</name>
    <dbReference type="NCBI Taxonomy" id="3899"/>
</organismHost>
<organismHost>
    <name type="scientific">Trifolium subterraneum</name>
    <name type="common">Subterranean clover</name>
    <dbReference type="NCBI Taxonomy" id="3900"/>
</organismHost>
<organismHost>
    <name type="scientific">Trifolium vesiculosum</name>
    <dbReference type="NCBI Taxonomy" id="97047"/>
</organismHost>
<organismHost>
    <name type="scientific">Trigonella foenum-graecum</name>
    <name type="common">Fenugreek</name>
    <dbReference type="NCBI Taxonomy" id="78534"/>
</organismHost>
<organismHost>
    <name type="scientific">Vicia faba</name>
    <name type="common">Broad bean</name>
    <name type="synonym">Faba vulgaris</name>
    <dbReference type="NCBI Taxonomy" id="3906"/>
</organismHost>
<organismHost>
    <name type="scientific">Vicia sativa</name>
    <name type="common">Spring vetch</name>
    <name type="synonym">Tare</name>
    <dbReference type="NCBI Taxonomy" id="3908"/>
</organismHost>
<protein>
    <recommendedName>
        <fullName>Genome polyprotein</fullName>
    </recommendedName>
    <component>
        <recommendedName>
            <fullName>Capsid protein</fullName>
            <shortName>CP</shortName>
        </recommendedName>
        <alternativeName>
            <fullName>Coat protein</fullName>
        </alternativeName>
    </component>
</protein>
<evidence type="ECO:0000250" key="1"/>
<evidence type="ECO:0000250" key="2">
    <source>
        <dbReference type="UniProtKB" id="P04517"/>
    </source>
</evidence>
<evidence type="ECO:0000305" key="3"/>
<feature type="chain" id="PRO_0000040268" description="Capsid protein" evidence="1">
    <location>
        <begin position="1" status="less than"/>
        <end position="90" status="greater than"/>
    </location>
</feature>
<feature type="chain" id="PRO_0000419998" description="Genome polyprotein">
    <location>
        <begin position="1"/>
        <end position="90"/>
    </location>
</feature>
<feature type="unsure residue" description="A or T">
    <location>
        <position position="86"/>
    </location>
</feature>
<feature type="non-terminal residue">
    <location>
        <position position="1"/>
    </location>
</feature>
<feature type="non-terminal residue">
    <location>
        <position position="90"/>
    </location>
</feature>